<keyword id="KW-0106">Calcium</keyword>
<keyword id="KW-1015">Disulfide bond</keyword>
<keyword id="KW-1199">Hemostasis impairing toxin</keyword>
<keyword id="KW-0378">Hydrolase</keyword>
<keyword id="KW-0479">Metal-binding</keyword>
<keyword id="KW-0482">Metalloprotease</keyword>
<keyword id="KW-0645">Protease</keyword>
<keyword id="KW-0964">Secreted</keyword>
<keyword id="KW-0732">Signal</keyword>
<keyword id="KW-0800">Toxin</keyword>
<keyword id="KW-0862">Zinc</keyword>
<keyword id="KW-0865">Zymogen</keyword>
<sequence>MIEVLLVTICLAAFPYQGSSIILESGNVNDYEVVYPRKVTALPKGAVQPKYEDAMQYELKVNGEPVVLHLEKNKGLFSKDYSETHYSPDGREITTYPPVEDHCYYHGRIENDADSTASISACNGLKGHFKLQGETYLIEPLKLSDSEAHAVFKFENVEKEDEAPKMCGVTQNWESYEPIKKASQSNLTPEHQRYIELFIVVDHGMFMKYNGNSDKIRRRIHQMVNIMKEAYRYLYIDIALTGVEIWSNKDMINVQPAAPQTLDSFGEWRKTDLLNRKSHDNAQLLTNTDFDGPTIGLAYVGTMCDPKLSTGVIQDHSPINLLVAVTMAHELGHNLGISHDTDSCSCGGYSCIMAPEISHEPSKYFSDCSYIQCWDFIMKENPQCILNKRLRTDTVSTPVSGNELLEAGE</sequence>
<feature type="signal peptide" evidence="2">
    <location>
        <begin position="1"/>
        <end position="20"/>
    </location>
</feature>
<feature type="propeptide" id="PRO_0000329991" evidence="1">
    <location>
        <begin position="21"/>
        <end position="189"/>
    </location>
</feature>
<feature type="chain" id="PRO_0000329992" description="Snake venom metalloproteinase BITM02A">
    <location>
        <begin position="190"/>
        <end position="389"/>
    </location>
</feature>
<feature type="propeptide" id="PRO_0000329993" evidence="1">
    <location>
        <begin position="390"/>
        <end position="409"/>
    </location>
</feature>
<feature type="domain" description="Peptidase M12B" evidence="3">
    <location>
        <begin position="193"/>
        <end position="389"/>
    </location>
</feature>
<feature type="active site" evidence="3 4">
    <location>
        <position position="330"/>
    </location>
</feature>
<feature type="binding site" evidence="1">
    <location>
        <position position="196"/>
    </location>
    <ligand>
        <name>Ca(2+)</name>
        <dbReference type="ChEBI" id="CHEBI:29108"/>
        <label>1</label>
    </ligand>
</feature>
<feature type="binding site" evidence="1">
    <location>
        <position position="280"/>
    </location>
    <ligand>
        <name>Ca(2+)</name>
        <dbReference type="ChEBI" id="CHEBI:29108"/>
        <label>1</label>
    </ligand>
</feature>
<feature type="binding site" evidence="1">
    <location>
        <position position="329"/>
    </location>
    <ligand>
        <name>Zn(2+)</name>
        <dbReference type="ChEBI" id="CHEBI:29105"/>
        <note>catalytic</note>
    </ligand>
</feature>
<feature type="binding site" evidence="1">
    <location>
        <position position="333"/>
    </location>
    <ligand>
        <name>Zn(2+)</name>
        <dbReference type="ChEBI" id="CHEBI:29105"/>
        <note>catalytic</note>
    </ligand>
</feature>
<feature type="binding site" evidence="1">
    <location>
        <position position="339"/>
    </location>
    <ligand>
        <name>Zn(2+)</name>
        <dbReference type="ChEBI" id="CHEBI:29105"/>
        <note>catalytic</note>
    </ligand>
</feature>
<feature type="binding site" evidence="1">
    <location>
        <position position="384"/>
    </location>
    <ligand>
        <name>Ca(2+)</name>
        <dbReference type="ChEBI" id="CHEBI:29108"/>
        <label>1</label>
    </ligand>
</feature>
<feature type="binding site" evidence="1">
    <location>
        <position position="387"/>
    </location>
    <ligand>
        <name>Ca(2+)</name>
        <dbReference type="ChEBI" id="CHEBI:29108"/>
        <label>1</label>
    </ligand>
</feature>
<feature type="binding site" evidence="1">
    <location>
        <position position="399"/>
    </location>
    <ligand>
        <name>Ca(2+)</name>
        <dbReference type="ChEBI" id="CHEBI:29108"/>
        <label>2</label>
    </ligand>
</feature>
<feature type="binding site" evidence="1">
    <location>
        <position position="402"/>
    </location>
    <ligand>
        <name>Ca(2+)</name>
        <dbReference type="ChEBI" id="CHEBI:29108"/>
        <label>2</label>
    </ligand>
</feature>
<feature type="binding site" evidence="1">
    <location>
        <position position="404"/>
    </location>
    <ligand>
        <name>Ca(2+)</name>
        <dbReference type="ChEBI" id="CHEBI:29108"/>
        <label>2</label>
    </ligand>
</feature>
<feature type="binding site" evidence="1">
    <location>
        <position position="406"/>
    </location>
    <ligand>
        <name>Ca(2+)</name>
        <dbReference type="ChEBI" id="CHEBI:29108"/>
        <label>2</label>
    </ligand>
</feature>
<feature type="binding site" evidence="1">
    <location>
        <position position="409"/>
    </location>
    <ligand>
        <name>Ca(2+)</name>
        <dbReference type="ChEBI" id="CHEBI:29108"/>
        <label>2</label>
    </ligand>
</feature>
<feature type="disulfide bond" evidence="3">
    <location>
        <begin position="304"/>
        <end position="384"/>
    </location>
</feature>
<feature type="disulfide bond" evidence="3">
    <location>
        <begin position="344"/>
        <end position="368"/>
    </location>
</feature>
<feature type="disulfide bond" evidence="3">
    <location>
        <begin position="346"/>
        <end position="351"/>
    </location>
</feature>
<reference key="1">
    <citation type="journal article" date="2002" name="Gene">
        <title>A survey of gene expression and diversity in the venom glands of the pitviper snake Bothrops insularis through the generation of expressed sequence tags (ESTs).</title>
        <authorList>
            <person name="Junqueira-de-Azevedo I.L.M."/>
            <person name="Ho P.L."/>
        </authorList>
    </citation>
    <scope>NUCLEOTIDE SEQUENCE [LARGE SCALE MRNA]</scope>
    <source>
        <tissue>Venom gland</tissue>
    </source>
</reference>
<organism>
    <name type="scientific">Bothrops insularis</name>
    <name type="common">Golden lancehead</name>
    <name type="synonym">Lachesis insularis</name>
    <dbReference type="NCBI Taxonomy" id="8723"/>
    <lineage>
        <taxon>Eukaryota</taxon>
        <taxon>Metazoa</taxon>
        <taxon>Chordata</taxon>
        <taxon>Craniata</taxon>
        <taxon>Vertebrata</taxon>
        <taxon>Euteleostomi</taxon>
        <taxon>Lepidosauria</taxon>
        <taxon>Squamata</taxon>
        <taxon>Bifurcata</taxon>
        <taxon>Unidentata</taxon>
        <taxon>Episquamata</taxon>
        <taxon>Toxicofera</taxon>
        <taxon>Serpentes</taxon>
        <taxon>Colubroidea</taxon>
        <taxon>Viperidae</taxon>
        <taxon>Crotalinae</taxon>
        <taxon>Bothrops</taxon>
    </lineage>
</organism>
<evidence type="ECO:0000250" key="1"/>
<evidence type="ECO:0000255" key="2"/>
<evidence type="ECO:0000255" key="3">
    <source>
        <dbReference type="PROSITE-ProRule" id="PRU00276"/>
    </source>
</evidence>
<evidence type="ECO:0000255" key="4">
    <source>
        <dbReference type="PROSITE-ProRule" id="PRU10095"/>
    </source>
</evidence>
<evidence type="ECO:0000305" key="5"/>
<accession>Q8QG89</accession>
<protein>
    <recommendedName>
        <fullName>Snake venom metalloproteinase BITM02A</fullName>
        <shortName>SVMP</shortName>
        <ecNumber>3.4.24.-</ecNumber>
    </recommendedName>
</protein>
<proteinExistence type="evidence at transcript level"/>
<name>VM1B_BOTIN</name>
<dbReference type="EC" id="3.4.24.-"/>
<dbReference type="EMBL" id="AF490533">
    <property type="protein sequence ID" value="AAM09692.1"/>
    <property type="molecule type" value="mRNA"/>
</dbReference>
<dbReference type="SMR" id="Q8QG89"/>
<dbReference type="GO" id="GO:0005576">
    <property type="term" value="C:extracellular region"/>
    <property type="evidence" value="ECO:0007669"/>
    <property type="project" value="UniProtKB-SubCell"/>
</dbReference>
<dbReference type="GO" id="GO:0005886">
    <property type="term" value="C:plasma membrane"/>
    <property type="evidence" value="ECO:0007669"/>
    <property type="project" value="TreeGrafter"/>
</dbReference>
<dbReference type="GO" id="GO:0046872">
    <property type="term" value="F:metal ion binding"/>
    <property type="evidence" value="ECO:0007669"/>
    <property type="project" value="UniProtKB-KW"/>
</dbReference>
<dbReference type="GO" id="GO:0004222">
    <property type="term" value="F:metalloendopeptidase activity"/>
    <property type="evidence" value="ECO:0007669"/>
    <property type="project" value="InterPro"/>
</dbReference>
<dbReference type="GO" id="GO:0090729">
    <property type="term" value="F:toxin activity"/>
    <property type="evidence" value="ECO:0007669"/>
    <property type="project" value="UniProtKB-KW"/>
</dbReference>
<dbReference type="GO" id="GO:0006508">
    <property type="term" value="P:proteolysis"/>
    <property type="evidence" value="ECO:0007669"/>
    <property type="project" value="UniProtKB-KW"/>
</dbReference>
<dbReference type="CDD" id="cd04269">
    <property type="entry name" value="ZnMc_adamalysin_II_like"/>
    <property type="match status" value="1"/>
</dbReference>
<dbReference type="FunFam" id="3.40.390.10:FF:000002">
    <property type="entry name" value="Disintegrin and metalloproteinase domain-containing protein 22"/>
    <property type="match status" value="1"/>
</dbReference>
<dbReference type="Gene3D" id="3.40.390.10">
    <property type="entry name" value="Collagenase (Catalytic Domain)"/>
    <property type="match status" value="1"/>
</dbReference>
<dbReference type="InterPro" id="IPR024079">
    <property type="entry name" value="MetalloPept_cat_dom_sf"/>
</dbReference>
<dbReference type="InterPro" id="IPR001590">
    <property type="entry name" value="Peptidase_M12B"/>
</dbReference>
<dbReference type="InterPro" id="IPR002870">
    <property type="entry name" value="Peptidase_M12B_N"/>
</dbReference>
<dbReference type="InterPro" id="IPR034027">
    <property type="entry name" value="Reprolysin_adamalysin"/>
</dbReference>
<dbReference type="PANTHER" id="PTHR11905">
    <property type="entry name" value="ADAM A DISINTEGRIN AND METALLOPROTEASE DOMAIN"/>
    <property type="match status" value="1"/>
</dbReference>
<dbReference type="PANTHER" id="PTHR11905:SF32">
    <property type="entry name" value="DISINTEGRIN AND METALLOPROTEINASE DOMAIN-CONTAINING PROTEIN 28"/>
    <property type="match status" value="1"/>
</dbReference>
<dbReference type="Pfam" id="PF01562">
    <property type="entry name" value="Pep_M12B_propep"/>
    <property type="match status" value="1"/>
</dbReference>
<dbReference type="Pfam" id="PF01421">
    <property type="entry name" value="Reprolysin"/>
    <property type="match status" value="1"/>
</dbReference>
<dbReference type="SUPFAM" id="SSF55486">
    <property type="entry name" value="Metalloproteases ('zincins'), catalytic domain"/>
    <property type="match status" value="1"/>
</dbReference>
<dbReference type="PROSITE" id="PS50215">
    <property type="entry name" value="ADAM_MEPRO"/>
    <property type="match status" value="1"/>
</dbReference>
<dbReference type="PROSITE" id="PS00142">
    <property type="entry name" value="ZINC_PROTEASE"/>
    <property type="match status" value="1"/>
</dbReference>
<comment type="function">
    <text evidence="1">Snake venom metalloproteinase that impairs hemostasis in the envenomed animal.</text>
</comment>
<comment type="cofactor">
    <cofactor evidence="1">
        <name>Zn(2+)</name>
        <dbReference type="ChEBI" id="CHEBI:29105"/>
    </cofactor>
    <text evidence="1">Binds 1 zinc ion per subunit.</text>
</comment>
<comment type="subunit">
    <text evidence="1">Monomer.</text>
</comment>
<comment type="subcellular location">
    <subcellularLocation>
        <location evidence="1">Secreted</location>
    </subcellularLocation>
</comment>
<comment type="tissue specificity">
    <text>Expressed by the venom gland.</text>
</comment>
<comment type="similarity">
    <text evidence="5">Belongs to the venom metalloproteinase (M12B) family. P-I subfamily.</text>
</comment>